<comment type="function">
    <text evidence="1">Component of the U3 small nucleolar ribonucleoprotein. Required for the early cleavages at sites A0, A1 and A2 during 18S ribosomal pre-RNA processing (By similarity).</text>
</comment>
<comment type="subunit">
    <text evidence="1">Component of a heterotrimeric complex containing IMP3, IMP4 and MPP10.</text>
</comment>
<comment type="subcellular location">
    <subcellularLocation>
        <location evidence="1">Nucleus</location>
        <location evidence="1">Nucleolus</location>
    </subcellularLocation>
</comment>
<keyword id="KW-0539">Nucleus</keyword>
<keyword id="KW-1185">Reference proteome</keyword>
<keyword id="KW-0687">Ribonucleoprotein</keyword>
<keyword id="KW-0690">Ribosome biogenesis</keyword>
<keyword id="KW-0698">rRNA processing</keyword>
<sequence length="283" mass="32545">MLRRQARERREYLYRKAQELQESQLQQKRDLIKQALAQGKPLPKEVADDTKLQRDYQYDESAQESIDDEYSALSGIVDPKVIVTTSRDPSTRLSQFAKEVKLLFPTSVRLNRGNYIMKNLVDACQKSGTTDLVVLHEHRGVPTALTISHFPHGPTASFSLHNVVLRHDILNAGNQSEVHPHLIFDNFTTPLGQRVVKILKHMFPPGVKKDSPRVITFANRGDFISVRQHVYVKTRDGVELAEVGPRFEMKLYELTLGTLENKDADVEWQLRRFVRTANRKDYL</sequence>
<gene>
    <name type="primary">IMP4</name>
    <name type="ordered locus">AER430W</name>
</gene>
<protein>
    <recommendedName>
        <fullName>U3 small nucleolar ribonucleoprotein protein IMP4</fullName>
        <shortName>U3 snoRNP protein IMP4</shortName>
    </recommendedName>
</protein>
<evidence type="ECO:0000250" key="1"/>
<evidence type="ECO:0000255" key="2">
    <source>
        <dbReference type="PROSITE-ProRule" id="PRU00034"/>
    </source>
</evidence>
<dbReference type="EMBL" id="AE016818">
    <property type="protein sequence ID" value="AAS53109.2"/>
    <property type="molecule type" value="Genomic_DNA"/>
</dbReference>
<dbReference type="RefSeq" id="NP_985285.2">
    <property type="nucleotide sequence ID" value="NM_210639.2"/>
</dbReference>
<dbReference type="SMR" id="Q755T8"/>
<dbReference type="FunCoup" id="Q755T8">
    <property type="interactions" value="965"/>
</dbReference>
<dbReference type="STRING" id="284811.Q755T8"/>
<dbReference type="EnsemblFungi" id="AAS53109">
    <property type="protein sequence ID" value="AAS53109"/>
    <property type="gene ID" value="AGOS_AER430W"/>
</dbReference>
<dbReference type="GeneID" id="4621504"/>
<dbReference type="KEGG" id="ago:AGOS_AER430W"/>
<dbReference type="eggNOG" id="KOG2781">
    <property type="taxonomic scope" value="Eukaryota"/>
</dbReference>
<dbReference type="HOGENOM" id="CLU_040063_2_0_1"/>
<dbReference type="InParanoid" id="Q755T8"/>
<dbReference type="OMA" id="IGTMSEQ"/>
<dbReference type="OrthoDB" id="10253204at2759"/>
<dbReference type="Proteomes" id="UP000000591">
    <property type="component" value="Chromosome V"/>
</dbReference>
<dbReference type="GO" id="GO:0034457">
    <property type="term" value="C:Mpp10 complex"/>
    <property type="evidence" value="ECO:0000318"/>
    <property type="project" value="GO_Central"/>
</dbReference>
<dbReference type="GO" id="GO:0005730">
    <property type="term" value="C:nucleolus"/>
    <property type="evidence" value="ECO:0000318"/>
    <property type="project" value="GO_Central"/>
</dbReference>
<dbReference type="GO" id="GO:0032040">
    <property type="term" value="C:small-subunit processome"/>
    <property type="evidence" value="ECO:0000318"/>
    <property type="project" value="GO_Central"/>
</dbReference>
<dbReference type="GO" id="GO:0140691">
    <property type="term" value="F:RNA folding chaperone"/>
    <property type="evidence" value="ECO:0007669"/>
    <property type="project" value="EnsemblFungi"/>
</dbReference>
<dbReference type="GO" id="GO:0042134">
    <property type="term" value="F:rRNA primary transcript binding"/>
    <property type="evidence" value="ECO:0007669"/>
    <property type="project" value="EnsemblFungi"/>
</dbReference>
<dbReference type="GO" id="GO:0043047">
    <property type="term" value="F:single-stranded telomeric DNA binding"/>
    <property type="evidence" value="ECO:0007669"/>
    <property type="project" value="EnsemblFungi"/>
</dbReference>
<dbReference type="GO" id="GO:0030515">
    <property type="term" value="F:snoRNA binding"/>
    <property type="evidence" value="ECO:0000318"/>
    <property type="project" value="GO_Central"/>
</dbReference>
<dbReference type="GO" id="GO:0042274">
    <property type="term" value="P:ribosomal small subunit biogenesis"/>
    <property type="evidence" value="ECO:0007669"/>
    <property type="project" value="EnsemblFungi"/>
</dbReference>
<dbReference type="GO" id="GO:0006364">
    <property type="term" value="P:rRNA processing"/>
    <property type="evidence" value="ECO:0000318"/>
    <property type="project" value="GO_Central"/>
</dbReference>
<dbReference type="FunFam" id="3.40.50.10480:FF:000001">
    <property type="entry name" value="IMP4, U3 small nucleolar ribonucleoprotein"/>
    <property type="match status" value="1"/>
</dbReference>
<dbReference type="Gene3D" id="3.40.50.10480">
    <property type="entry name" value="Probable brix-domain ribosomal biogenesis protein"/>
    <property type="match status" value="1"/>
</dbReference>
<dbReference type="InterPro" id="IPR007109">
    <property type="entry name" value="Brix"/>
</dbReference>
<dbReference type="InterPro" id="IPR044281">
    <property type="entry name" value="IMP4/RPF1"/>
</dbReference>
<dbReference type="PANTHER" id="PTHR22734">
    <property type="entry name" value="U3 SMALL NUCLEOLAR RIBONUCLEOPROTEIN PROTEIN IMP4"/>
    <property type="match status" value="1"/>
</dbReference>
<dbReference type="PANTHER" id="PTHR22734:SF2">
    <property type="entry name" value="U3 SMALL NUCLEOLAR RIBONUCLEOPROTEIN PROTEIN IMP4"/>
    <property type="match status" value="1"/>
</dbReference>
<dbReference type="Pfam" id="PF04427">
    <property type="entry name" value="Brix"/>
    <property type="match status" value="1"/>
</dbReference>
<dbReference type="SMART" id="SM00879">
    <property type="entry name" value="Brix"/>
    <property type="match status" value="1"/>
</dbReference>
<dbReference type="SUPFAM" id="SSF52954">
    <property type="entry name" value="Class II aaRS ABD-related"/>
    <property type="match status" value="1"/>
</dbReference>
<dbReference type="PROSITE" id="PS50833">
    <property type="entry name" value="BRIX"/>
    <property type="match status" value="1"/>
</dbReference>
<accession>Q755T8</accession>
<name>IMP4_EREGS</name>
<proteinExistence type="inferred from homology"/>
<reference key="1">
    <citation type="journal article" date="2004" name="Science">
        <title>The Ashbya gossypii genome as a tool for mapping the ancient Saccharomyces cerevisiae genome.</title>
        <authorList>
            <person name="Dietrich F.S."/>
            <person name="Voegeli S."/>
            <person name="Brachat S."/>
            <person name="Lerch A."/>
            <person name="Gates K."/>
            <person name="Steiner S."/>
            <person name="Mohr C."/>
            <person name="Poehlmann R."/>
            <person name="Luedi P."/>
            <person name="Choi S."/>
            <person name="Wing R.A."/>
            <person name="Flavier A."/>
            <person name="Gaffney T.D."/>
            <person name="Philippsen P."/>
        </authorList>
    </citation>
    <scope>NUCLEOTIDE SEQUENCE [LARGE SCALE GENOMIC DNA]</scope>
    <source>
        <strain>ATCC 10895 / CBS 109.51 / FGSC 9923 / NRRL Y-1056</strain>
    </source>
</reference>
<reference key="2">
    <citation type="journal article" date="2013" name="G3 (Bethesda)">
        <title>Genomes of Ashbya fungi isolated from insects reveal four mating-type loci, numerous translocations, lack of transposons, and distinct gene duplications.</title>
        <authorList>
            <person name="Dietrich F.S."/>
            <person name="Voegeli S."/>
            <person name="Kuo S."/>
            <person name="Philippsen P."/>
        </authorList>
    </citation>
    <scope>GENOME REANNOTATION</scope>
    <scope>SEQUENCE REVISION TO 209</scope>
    <source>
        <strain>ATCC 10895 / CBS 109.51 / FGSC 9923 / NRRL Y-1056</strain>
    </source>
</reference>
<organism>
    <name type="scientific">Eremothecium gossypii (strain ATCC 10895 / CBS 109.51 / FGSC 9923 / NRRL Y-1056)</name>
    <name type="common">Yeast</name>
    <name type="synonym">Ashbya gossypii</name>
    <dbReference type="NCBI Taxonomy" id="284811"/>
    <lineage>
        <taxon>Eukaryota</taxon>
        <taxon>Fungi</taxon>
        <taxon>Dikarya</taxon>
        <taxon>Ascomycota</taxon>
        <taxon>Saccharomycotina</taxon>
        <taxon>Saccharomycetes</taxon>
        <taxon>Saccharomycetales</taxon>
        <taxon>Saccharomycetaceae</taxon>
        <taxon>Eremothecium</taxon>
    </lineage>
</organism>
<feature type="chain" id="PRO_0000120240" description="U3 small nucleolar ribonucleoprotein protein IMP4">
    <location>
        <begin position="1"/>
        <end position="283"/>
    </location>
</feature>
<feature type="domain" description="Brix" evidence="2">
    <location>
        <begin position="79"/>
        <end position="260"/>
    </location>
</feature>